<protein>
    <recommendedName>
        <fullName evidence="1">Small ribosomal subunit protein uS13</fullName>
    </recommendedName>
    <alternativeName>
        <fullName evidence="3">30S ribosomal protein S13</fullName>
    </alternativeName>
</protein>
<comment type="function">
    <text evidence="1">Located at the top of the head of the 30S subunit, it contacts several helices of the 16S rRNA. In the 70S ribosome it contacts the 23S rRNA (bridge B1a) and protein L5 of the 50S subunit (bridge B1b), connecting the 2 subunits; these bridges are implicated in subunit movement. Contacts the tRNAs in the A and P-sites.</text>
</comment>
<comment type="subunit">
    <text evidence="1">Part of the 30S ribosomal subunit. Forms a loose heterodimer with protein S19. Forms two bridges to the 50S subunit in the 70S ribosome.</text>
</comment>
<comment type="similarity">
    <text evidence="1">Belongs to the universal ribosomal protein uS13 family.</text>
</comment>
<sequence length="121" mass="13654">MARIAGVDIPRDKRIEVSLTYIYGVGLTRSQAILAKTGVNPDIRVKDLEDGDLQKLRGALENYTVEGDLRRQEGMALKRLQDIGCLRGRRHRMSLPVRGQRTRTNARTRRGARKTVAGKKK</sequence>
<accession>Q3AMQ1</accession>
<feature type="chain" id="PRO_0000306729" description="Small ribosomal subunit protein uS13">
    <location>
        <begin position="1"/>
        <end position="121"/>
    </location>
</feature>
<feature type="region of interest" description="Disordered" evidence="2">
    <location>
        <begin position="97"/>
        <end position="121"/>
    </location>
</feature>
<feature type="compositionally biased region" description="Basic residues" evidence="2">
    <location>
        <begin position="100"/>
        <end position="121"/>
    </location>
</feature>
<evidence type="ECO:0000255" key="1">
    <source>
        <dbReference type="HAMAP-Rule" id="MF_01315"/>
    </source>
</evidence>
<evidence type="ECO:0000256" key="2">
    <source>
        <dbReference type="SAM" id="MobiDB-lite"/>
    </source>
</evidence>
<evidence type="ECO:0000305" key="3"/>
<name>RS13_SYNSC</name>
<gene>
    <name evidence="1" type="primary">rpsM</name>
    <name evidence="1" type="synonym">rps13</name>
    <name type="ordered locus">Syncc9605_0355</name>
</gene>
<reference key="1">
    <citation type="submission" date="2005-07" db="EMBL/GenBank/DDBJ databases">
        <title>Complete sequence of Synechococcus sp. CC9605.</title>
        <authorList>
            <consortium name="US DOE Joint Genome Institute"/>
            <person name="Copeland A."/>
            <person name="Lucas S."/>
            <person name="Lapidus A."/>
            <person name="Barry K."/>
            <person name="Detter J.C."/>
            <person name="Glavina T."/>
            <person name="Hammon N."/>
            <person name="Israni S."/>
            <person name="Pitluck S."/>
            <person name="Schmutz J."/>
            <person name="Martinez M."/>
            <person name="Larimer F."/>
            <person name="Land M."/>
            <person name="Kyrpides N."/>
            <person name="Ivanova N."/>
            <person name="Richardson P."/>
        </authorList>
    </citation>
    <scope>NUCLEOTIDE SEQUENCE [LARGE SCALE GENOMIC DNA]</scope>
    <source>
        <strain>CC9605</strain>
    </source>
</reference>
<dbReference type="EMBL" id="CP000110">
    <property type="protein sequence ID" value="ABB34131.1"/>
    <property type="molecule type" value="Genomic_DNA"/>
</dbReference>
<dbReference type="RefSeq" id="WP_011363375.1">
    <property type="nucleotide sequence ID" value="NC_007516.1"/>
</dbReference>
<dbReference type="SMR" id="Q3AMQ1"/>
<dbReference type="STRING" id="110662.Syncc9605_0355"/>
<dbReference type="KEGG" id="syd:Syncc9605_0355"/>
<dbReference type="eggNOG" id="COG0099">
    <property type="taxonomic scope" value="Bacteria"/>
</dbReference>
<dbReference type="HOGENOM" id="CLU_103849_1_2_3"/>
<dbReference type="OrthoDB" id="9803610at2"/>
<dbReference type="GO" id="GO:0005829">
    <property type="term" value="C:cytosol"/>
    <property type="evidence" value="ECO:0007669"/>
    <property type="project" value="TreeGrafter"/>
</dbReference>
<dbReference type="GO" id="GO:0015935">
    <property type="term" value="C:small ribosomal subunit"/>
    <property type="evidence" value="ECO:0007669"/>
    <property type="project" value="TreeGrafter"/>
</dbReference>
<dbReference type="GO" id="GO:0019843">
    <property type="term" value="F:rRNA binding"/>
    <property type="evidence" value="ECO:0007669"/>
    <property type="project" value="UniProtKB-UniRule"/>
</dbReference>
<dbReference type="GO" id="GO:0003735">
    <property type="term" value="F:structural constituent of ribosome"/>
    <property type="evidence" value="ECO:0007669"/>
    <property type="project" value="InterPro"/>
</dbReference>
<dbReference type="GO" id="GO:0000049">
    <property type="term" value="F:tRNA binding"/>
    <property type="evidence" value="ECO:0007669"/>
    <property type="project" value="UniProtKB-UniRule"/>
</dbReference>
<dbReference type="GO" id="GO:0006412">
    <property type="term" value="P:translation"/>
    <property type="evidence" value="ECO:0007669"/>
    <property type="project" value="UniProtKB-UniRule"/>
</dbReference>
<dbReference type="FunFam" id="1.10.8.50:FF:000001">
    <property type="entry name" value="30S ribosomal protein S13"/>
    <property type="match status" value="1"/>
</dbReference>
<dbReference type="Gene3D" id="1.10.8.50">
    <property type="match status" value="1"/>
</dbReference>
<dbReference type="Gene3D" id="4.10.910.10">
    <property type="entry name" value="30s ribosomal protein s13, domain 2"/>
    <property type="match status" value="1"/>
</dbReference>
<dbReference type="HAMAP" id="MF_01315">
    <property type="entry name" value="Ribosomal_uS13"/>
    <property type="match status" value="1"/>
</dbReference>
<dbReference type="InterPro" id="IPR027437">
    <property type="entry name" value="Rbsml_uS13_C"/>
</dbReference>
<dbReference type="InterPro" id="IPR001892">
    <property type="entry name" value="Ribosomal_uS13"/>
</dbReference>
<dbReference type="InterPro" id="IPR010979">
    <property type="entry name" value="Ribosomal_uS13-like_H2TH"/>
</dbReference>
<dbReference type="InterPro" id="IPR019980">
    <property type="entry name" value="Ribosomal_uS13_bac-type"/>
</dbReference>
<dbReference type="InterPro" id="IPR018269">
    <property type="entry name" value="Ribosomal_uS13_CS"/>
</dbReference>
<dbReference type="NCBIfam" id="TIGR03631">
    <property type="entry name" value="uS13_bact"/>
    <property type="match status" value="1"/>
</dbReference>
<dbReference type="PANTHER" id="PTHR10871">
    <property type="entry name" value="30S RIBOSOMAL PROTEIN S13/40S RIBOSOMAL PROTEIN S18"/>
    <property type="match status" value="1"/>
</dbReference>
<dbReference type="PANTHER" id="PTHR10871:SF1">
    <property type="entry name" value="SMALL RIBOSOMAL SUBUNIT PROTEIN US13M"/>
    <property type="match status" value="1"/>
</dbReference>
<dbReference type="Pfam" id="PF00416">
    <property type="entry name" value="Ribosomal_S13"/>
    <property type="match status" value="1"/>
</dbReference>
<dbReference type="PIRSF" id="PIRSF002134">
    <property type="entry name" value="Ribosomal_S13"/>
    <property type="match status" value="1"/>
</dbReference>
<dbReference type="SUPFAM" id="SSF46946">
    <property type="entry name" value="S13-like H2TH domain"/>
    <property type="match status" value="1"/>
</dbReference>
<dbReference type="PROSITE" id="PS00646">
    <property type="entry name" value="RIBOSOMAL_S13_1"/>
    <property type="match status" value="1"/>
</dbReference>
<dbReference type="PROSITE" id="PS50159">
    <property type="entry name" value="RIBOSOMAL_S13_2"/>
    <property type="match status" value="1"/>
</dbReference>
<keyword id="KW-0687">Ribonucleoprotein</keyword>
<keyword id="KW-0689">Ribosomal protein</keyword>
<keyword id="KW-0694">RNA-binding</keyword>
<keyword id="KW-0699">rRNA-binding</keyword>
<keyword id="KW-0820">tRNA-binding</keyword>
<proteinExistence type="inferred from homology"/>
<organism>
    <name type="scientific">Synechococcus sp. (strain CC9605)</name>
    <dbReference type="NCBI Taxonomy" id="110662"/>
    <lineage>
        <taxon>Bacteria</taxon>
        <taxon>Bacillati</taxon>
        <taxon>Cyanobacteriota</taxon>
        <taxon>Cyanophyceae</taxon>
        <taxon>Synechococcales</taxon>
        <taxon>Synechococcaceae</taxon>
        <taxon>Synechococcus</taxon>
    </lineage>
</organism>